<accession>Q57152</accession>
<accession>O05061</accession>
<gene>
    <name type="ordered locus">HI_1436</name>
</gene>
<evidence type="ECO:0000305" key="1"/>
<name>Y1436_HAEIN</name>
<feature type="chain" id="PRO_0000169327" description="Uncharacterized protein HI_1436">
    <location>
        <begin position="1"/>
        <end position="106"/>
    </location>
</feature>
<organism>
    <name type="scientific">Haemophilus influenzae (strain ATCC 51907 / DSM 11121 / KW20 / Rd)</name>
    <dbReference type="NCBI Taxonomy" id="71421"/>
    <lineage>
        <taxon>Bacteria</taxon>
        <taxon>Pseudomonadati</taxon>
        <taxon>Pseudomonadota</taxon>
        <taxon>Gammaproteobacteria</taxon>
        <taxon>Pasteurellales</taxon>
        <taxon>Pasteurellaceae</taxon>
        <taxon>Haemophilus</taxon>
    </lineage>
</organism>
<comment type="similarity">
    <text evidence="1">To the N-terminal of E.carotovora exoenzyme regulation regulon ORF1. The C-terminal part is colinear with YqcB.</text>
</comment>
<comment type="similarity">
    <text evidence="1">To E.coli YqcC.</text>
</comment>
<reference key="1">
    <citation type="journal article" date="1995" name="Science">
        <title>Whole-genome random sequencing and assembly of Haemophilus influenzae Rd.</title>
        <authorList>
            <person name="Fleischmann R.D."/>
            <person name="Adams M.D."/>
            <person name="White O."/>
            <person name="Clayton R.A."/>
            <person name="Kirkness E.F."/>
            <person name="Kerlavage A.R."/>
            <person name="Bult C.J."/>
            <person name="Tomb J.-F."/>
            <person name="Dougherty B.A."/>
            <person name="Merrick J.M."/>
            <person name="McKenney K."/>
            <person name="Sutton G.G."/>
            <person name="FitzHugh W."/>
            <person name="Fields C.A."/>
            <person name="Gocayne J.D."/>
            <person name="Scott J.D."/>
            <person name="Shirley R."/>
            <person name="Liu L.-I."/>
            <person name="Glodek A."/>
            <person name="Kelley J.M."/>
            <person name="Weidman J.F."/>
            <person name="Phillips C.A."/>
            <person name="Spriggs T."/>
            <person name="Hedblom E."/>
            <person name="Cotton M.D."/>
            <person name="Utterback T.R."/>
            <person name="Hanna M.C."/>
            <person name="Nguyen D.T."/>
            <person name="Saudek D.M."/>
            <person name="Brandon R.C."/>
            <person name="Fine L.D."/>
            <person name="Fritchman J.L."/>
            <person name="Fuhrmann J.L."/>
            <person name="Geoghagen N.S.M."/>
            <person name="Gnehm C.L."/>
            <person name="McDonald L.A."/>
            <person name="Small K.V."/>
            <person name="Fraser C.M."/>
            <person name="Smith H.O."/>
            <person name="Venter J.C."/>
        </authorList>
    </citation>
    <scope>NUCLEOTIDE SEQUENCE [LARGE SCALE GENOMIC DNA]</scope>
    <source>
        <strain>ATCC 51907 / DSM 11121 / KW20 / Rd</strain>
    </source>
</reference>
<dbReference type="EMBL" id="L42023">
    <property type="protein sequence ID" value="AAC23085.1"/>
    <property type="molecule type" value="Genomic_DNA"/>
</dbReference>
<dbReference type="PIR" id="I64171">
    <property type="entry name" value="I64171"/>
</dbReference>
<dbReference type="RefSeq" id="NP_439587.1">
    <property type="nucleotide sequence ID" value="NC_000907.1"/>
</dbReference>
<dbReference type="STRING" id="71421.HI_1436"/>
<dbReference type="EnsemblBacteria" id="AAC23085">
    <property type="protein sequence ID" value="AAC23085"/>
    <property type="gene ID" value="HI_1436"/>
</dbReference>
<dbReference type="KEGG" id="hin:HI_1436"/>
<dbReference type="PATRIC" id="fig|71421.8.peg.1496"/>
<dbReference type="eggNOG" id="COG3098">
    <property type="taxonomic scope" value="Bacteria"/>
</dbReference>
<dbReference type="HOGENOM" id="CLU_130358_0_0_6"/>
<dbReference type="OrthoDB" id="8794567at2"/>
<dbReference type="PhylomeDB" id="Q57152"/>
<dbReference type="BioCyc" id="HINF71421:G1GJ1-1461-MONOMER"/>
<dbReference type="Proteomes" id="UP000000579">
    <property type="component" value="Chromosome"/>
</dbReference>
<dbReference type="GO" id="GO:0044010">
    <property type="term" value="P:single-species biofilm formation"/>
    <property type="evidence" value="ECO:0000318"/>
    <property type="project" value="GO_Central"/>
</dbReference>
<dbReference type="FunFam" id="1.20.1440.40:FF:000001">
    <property type="entry name" value="DUF446 domain protein"/>
    <property type="match status" value="1"/>
</dbReference>
<dbReference type="Gene3D" id="1.20.1440.40">
    <property type="entry name" value="YqcC-like"/>
    <property type="match status" value="1"/>
</dbReference>
<dbReference type="InterPro" id="IPR007384">
    <property type="entry name" value="UCP006257"/>
</dbReference>
<dbReference type="InterPro" id="IPR023376">
    <property type="entry name" value="YqcC-like_dom"/>
</dbReference>
<dbReference type="InterPro" id="IPR036814">
    <property type="entry name" value="YqcC-like_sf"/>
</dbReference>
<dbReference type="PANTHER" id="PTHR39586:SF1">
    <property type="entry name" value="CYTOPLASMIC PROTEIN"/>
    <property type="match status" value="1"/>
</dbReference>
<dbReference type="PANTHER" id="PTHR39586">
    <property type="entry name" value="CYTOPLASMIC PROTEIN-RELATED"/>
    <property type="match status" value="1"/>
</dbReference>
<dbReference type="Pfam" id="PF04287">
    <property type="entry name" value="DUF446"/>
    <property type="match status" value="1"/>
</dbReference>
<dbReference type="PIRSF" id="PIRSF006257">
    <property type="entry name" value="UCP006257"/>
    <property type="match status" value="1"/>
</dbReference>
<dbReference type="SUPFAM" id="SSF158452">
    <property type="entry name" value="YqcC-like"/>
    <property type="match status" value="1"/>
</dbReference>
<proteinExistence type="predicted"/>
<keyword id="KW-1185">Reference proteome</keyword>
<sequence>MRNQTKQHLEQLQITMQQLNLWQTMPPAAEAFLSEEPFSIDTMSAEEWLQWVFIPRMQALLESGSALPNKIAISPYIEEAMKEFNELQQLLTPLVALEELXNNNEC</sequence>
<protein>
    <recommendedName>
        <fullName>Uncharacterized protein HI_1436</fullName>
    </recommendedName>
</protein>